<proteinExistence type="inferred from homology"/>
<keyword id="KW-0028">Amino-acid biosynthesis</keyword>
<keyword id="KW-0057">Aromatic amino acid biosynthesis</keyword>
<keyword id="KW-0067">ATP-binding</keyword>
<keyword id="KW-0963">Cytoplasm</keyword>
<keyword id="KW-0418">Kinase</keyword>
<keyword id="KW-0460">Magnesium</keyword>
<keyword id="KW-0479">Metal-binding</keyword>
<keyword id="KW-0547">Nucleotide-binding</keyword>
<keyword id="KW-0808">Transferase</keyword>
<reference key="1">
    <citation type="journal article" date="2008" name="J. Bacteriol.">
        <title>Genome sequence of a nephritogenic and highly transformable M49 strain of Streptococcus pyogenes.</title>
        <authorList>
            <person name="McShan W.M."/>
            <person name="Ferretti J.J."/>
            <person name="Karasawa T."/>
            <person name="Suvorov A.N."/>
            <person name="Lin S."/>
            <person name="Qin B."/>
            <person name="Jia H."/>
            <person name="Kenton S."/>
            <person name="Najar F."/>
            <person name="Wu H."/>
            <person name="Scott J."/>
            <person name="Roe B.A."/>
            <person name="Savic D.J."/>
        </authorList>
    </citation>
    <scope>NUCLEOTIDE SEQUENCE [LARGE SCALE GENOMIC DNA]</scope>
    <source>
        <strain>NZ131</strain>
    </source>
</reference>
<accession>B5XM06</accession>
<evidence type="ECO:0000255" key="1">
    <source>
        <dbReference type="HAMAP-Rule" id="MF_00109"/>
    </source>
</evidence>
<feature type="chain" id="PRO_1000094424" description="Shikimate kinase">
    <location>
        <begin position="1"/>
        <end position="163"/>
    </location>
</feature>
<feature type="binding site" evidence="1">
    <location>
        <begin position="10"/>
        <end position="15"/>
    </location>
    <ligand>
        <name>ATP</name>
        <dbReference type="ChEBI" id="CHEBI:30616"/>
    </ligand>
</feature>
<feature type="binding site" evidence="1">
    <location>
        <position position="14"/>
    </location>
    <ligand>
        <name>Mg(2+)</name>
        <dbReference type="ChEBI" id="CHEBI:18420"/>
    </ligand>
</feature>
<feature type="binding site" evidence="1">
    <location>
        <position position="28"/>
    </location>
    <ligand>
        <name>substrate</name>
    </ligand>
</feature>
<feature type="binding site" evidence="1">
    <location>
        <position position="52"/>
    </location>
    <ligand>
        <name>substrate</name>
    </ligand>
</feature>
<feature type="binding site" evidence="1">
    <location>
        <position position="75"/>
    </location>
    <ligand>
        <name>substrate</name>
    </ligand>
</feature>
<feature type="binding site" evidence="1">
    <location>
        <position position="116"/>
    </location>
    <ligand>
        <name>ATP</name>
        <dbReference type="ChEBI" id="CHEBI:30616"/>
    </ligand>
</feature>
<feature type="binding site" evidence="1">
    <location>
        <position position="134"/>
    </location>
    <ligand>
        <name>substrate</name>
    </ligand>
</feature>
<feature type="binding site" evidence="1">
    <location>
        <position position="151"/>
    </location>
    <ligand>
        <name>ATP</name>
        <dbReference type="ChEBI" id="CHEBI:30616"/>
    </ligand>
</feature>
<sequence length="163" mass="18779">MTKVLLGFMGVGKTTVSKHLSMHCKDMDAIIEAKIGMSIAAFFEQHGEIAFRTIENQVLKDLLFANDNSVIVTGGGVVVLQENRQLLRKNHQHNILLVASFETLYQRLKHDKKSQRPLFLKYSKEAFYEFYQQRMVFYEGLSDLVIRVDHRTPEEVANIIEGY</sequence>
<organism>
    <name type="scientific">Streptococcus pyogenes serotype M49 (strain NZ131)</name>
    <dbReference type="NCBI Taxonomy" id="471876"/>
    <lineage>
        <taxon>Bacteria</taxon>
        <taxon>Bacillati</taxon>
        <taxon>Bacillota</taxon>
        <taxon>Bacilli</taxon>
        <taxon>Lactobacillales</taxon>
        <taxon>Streptococcaceae</taxon>
        <taxon>Streptococcus</taxon>
    </lineage>
</organism>
<dbReference type="EC" id="2.7.1.71" evidence="1"/>
<dbReference type="EMBL" id="CP000829">
    <property type="protein sequence ID" value="ACI61368.1"/>
    <property type="molecule type" value="Genomic_DNA"/>
</dbReference>
<dbReference type="SMR" id="B5XM06"/>
<dbReference type="KEGG" id="soz:Spy49_1074c"/>
<dbReference type="HOGENOM" id="CLU_057607_4_3_9"/>
<dbReference type="UniPathway" id="UPA00053">
    <property type="reaction ID" value="UER00088"/>
</dbReference>
<dbReference type="Proteomes" id="UP000001039">
    <property type="component" value="Chromosome"/>
</dbReference>
<dbReference type="GO" id="GO:0005829">
    <property type="term" value="C:cytosol"/>
    <property type="evidence" value="ECO:0007669"/>
    <property type="project" value="TreeGrafter"/>
</dbReference>
<dbReference type="GO" id="GO:0005524">
    <property type="term" value="F:ATP binding"/>
    <property type="evidence" value="ECO:0007669"/>
    <property type="project" value="UniProtKB-UniRule"/>
</dbReference>
<dbReference type="GO" id="GO:0000287">
    <property type="term" value="F:magnesium ion binding"/>
    <property type="evidence" value="ECO:0007669"/>
    <property type="project" value="UniProtKB-UniRule"/>
</dbReference>
<dbReference type="GO" id="GO:0004765">
    <property type="term" value="F:shikimate kinase activity"/>
    <property type="evidence" value="ECO:0007669"/>
    <property type="project" value="UniProtKB-UniRule"/>
</dbReference>
<dbReference type="GO" id="GO:0008652">
    <property type="term" value="P:amino acid biosynthetic process"/>
    <property type="evidence" value="ECO:0007669"/>
    <property type="project" value="UniProtKB-KW"/>
</dbReference>
<dbReference type="GO" id="GO:0009073">
    <property type="term" value="P:aromatic amino acid family biosynthetic process"/>
    <property type="evidence" value="ECO:0007669"/>
    <property type="project" value="UniProtKB-KW"/>
</dbReference>
<dbReference type="GO" id="GO:0009423">
    <property type="term" value="P:chorismate biosynthetic process"/>
    <property type="evidence" value="ECO:0007669"/>
    <property type="project" value="UniProtKB-UniRule"/>
</dbReference>
<dbReference type="CDD" id="cd00464">
    <property type="entry name" value="SK"/>
    <property type="match status" value="1"/>
</dbReference>
<dbReference type="Gene3D" id="3.40.50.300">
    <property type="entry name" value="P-loop containing nucleotide triphosphate hydrolases"/>
    <property type="match status" value="1"/>
</dbReference>
<dbReference type="HAMAP" id="MF_00109">
    <property type="entry name" value="Shikimate_kinase"/>
    <property type="match status" value="1"/>
</dbReference>
<dbReference type="InterPro" id="IPR027417">
    <property type="entry name" value="P-loop_NTPase"/>
</dbReference>
<dbReference type="InterPro" id="IPR031322">
    <property type="entry name" value="Shikimate/glucono_kinase"/>
</dbReference>
<dbReference type="InterPro" id="IPR000623">
    <property type="entry name" value="Shikimate_kinase/TSH1"/>
</dbReference>
<dbReference type="PANTHER" id="PTHR21087">
    <property type="entry name" value="SHIKIMATE KINASE"/>
    <property type="match status" value="1"/>
</dbReference>
<dbReference type="PANTHER" id="PTHR21087:SF16">
    <property type="entry name" value="SHIKIMATE KINASE 1, CHLOROPLASTIC"/>
    <property type="match status" value="1"/>
</dbReference>
<dbReference type="Pfam" id="PF01202">
    <property type="entry name" value="SKI"/>
    <property type="match status" value="1"/>
</dbReference>
<dbReference type="PRINTS" id="PR01100">
    <property type="entry name" value="SHIKIMTKNASE"/>
</dbReference>
<dbReference type="SUPFAM" id="SSF52540">
    <property type="entry name" value="P-loop containing nucleoside triphosphate hydrolases"/>
    <property type="match status" value="1"/>
</dbReference>
<protein>
    <recommendedName>
        <fullName evidence="1">Shikimate kinase</fullName>
        <shortName evidence="1">SK</shortName>
        <ecNumber evidence="1">2.7.1.71</ecNumber>
    </recommendedName>
</protein>
<comment type="function">
    <text evidence="1">Catalyzes the specific phosphorylation of the 3-hydroxyl group of shikimic acid using ATP as a cosubstrate.</text>
</comment>
<comment type="catalytic activity">
    <reaction evidence="1">
        <text>shikimate + ATP = 3-phosphoshikimate + ADP + H(+)</text>
        <dbReference type="Rhea" id="RHEA:13121"/>
        <dbReference type="ChEBI" id="CHEBI:15378"/>
        <dbReference type="ChEBI" id="CHEBI:30616"/>
        <dbReference type="ChEBI" id="CHEBI:36208"/>
        <dbReference type="ChEBI" id="CHEBI:145989"/>
        <dbReference type="ChEBI" id="CHEBI:456216"/>
        <dbReference type="EC" id="2.7.1.71"/>
    </reaction>
</comment>
<comment type="cofactor">
    <cofactor evidence="1">
        <name>Mg(2+)</name>
        <dbReference type="ChEBI" id="CHEBI:18420"/>
    </cofactor>
    <text evidence="1">Binds 1 Mg(2+) ion per subunit.</text>
</comment>
<comment type="pathway">
    <text evidence="1">Metabolic intermediate biosynthesis; chorismate biosynthesis; chorismate from D-erythrose 4-phosphate and phosphoenolpyruvate: step 5/7.</text>
</comment>
<comment type="subunit">
    <text evidence="1">Monomer.</text>
</comment>
<comment type="subcellular location">
    <subcellularLocation>
        <location evidence="1">Cytoplasm</location>
    </subcellularLocation>
</comment>
<comment type="similarity">
    <text evidence="1">Belongs to the shikimate kinase family.</text>
</comment>
<name>AROK_STRPZ</name>
<gene>
    <name evidence="1" type="primary">aroK</name>
    <name type="ordered locus">Spy49_1074c</name>
</gene>